<protein>
    <recommendedName>
        <fullName evidence="1">Phosphoribosyl-AMP cyclohydrolase</fullName>
        <shortName evidence="1">PRA-CH</shortName>
        <ecNumber evidence="1">3.5.4.19</ecNumber>
    </recommendedName>
</protein>
<organism>
    <name type="scientific">Caulobacter sp. (strain K31)</name>
    <dbReference type="NCBI Taxonomy" id="366602"/>
    <lineage>
        <taxon>Bacteria</taxon>
        <taxon>Pseudomonadati</taxon>
        <taxon>Pseudomonadota</taxon>
        <taxon>Alphaproteobacteria</taxon>
        <taxon>Caulobacterales</taxon>
        <taxon>Caulobacteraceae</taxon>
        <taxon>Caulobacter</taxon>
    </lineage>
</organism>
<name>HIS3_CAUSK</name>
<accession>B0T5D0</accession>
<evidence type="ECO:0000255" key="1">
    <source>
        <dbReference type="HAMAP-Rule" id="MF_01021"/>
    </source>
</evidence>
<comment type="function">
    <text evidence="1">Catalyzes the hydrolysis of the adenine ring of phosphoribosyl-AMP.</text>
</comment>
<comment type="catalytic activity">
    <reaction evidence="1">
        <text>1-(5-phospho-beta-D-ribosyl)-5'-AMP + H2O = 1-(5-phospho-beta-D-ribosyl)-5-[(5-phospho-beta-D-ribosylamino)methylideneamino]imidazole-4-carboxamide</text>
        <dbReference type="Rhea" id="RHEA:20049"/>
        <dbReference type="ChEBI" id="CHEBI:15377"/>
        <dbReference type="ChEBI" id="CHEBI:58435"/>
        <dbReference type="ChEBI" id="CHEBI:59457"/>
        <dbReference type="EC" id="3.5.4.19"/>
    </reaction>
</comment>
<comment type="cofactor">
    <cofactor evidence="1">
        <name>Mg(2+)</name>
        <dbReference type="ChEBI" id="CHEBI:18420"/>
    </cofactor>
    <text evidence="1">Binds 1 Mg(2+) ion per subunit.</text>
</comment>
<comment type="cofactor">
    <cofactor evidence="1">
        <name>Zn(2+)</name>
        <dbReference type="ChEBI" id="CHEBI:29105"/>
    </cofactor>
    <text evidence="1">Binds 1 zinc ion per subunit.</text>
</comment>
<comment type="pathway">
    <text evidence="1">Amino-acid biosynthesis; L-histidine biosynthesis; L-histidine from 5-phospho-alpha-D-ribose 1-diphosphate: step 3/9.</text>
</comment>
<comment type="subunit">
    <text evidence="1">Homodimer.</text>
</comment>
<comment type="subcellular location">
    <subcellularLocation>
        <location evidence="1">Cytoplasm</location>
    </subcellularLocation>
</comment>
<comment type="similarity">
    <text evidence="1">Belongs to the PRA-CH family.</text>
</comment>
<reference key="1">
    <citation type="submission" date="2008-01" db="EMBL/GenBank/DDBJ databases">
        <title>Complete sequence of chromosome of Caulobacter sp. K31.</title>
        <authorList>
            <consortium name="US DOE Joint Genome Institute"/>
            <person name="Copeland A."/>
            <person name="Lucas S."/>
            <person name="Lapidus A."/>
            <person name="Barry K."/>
            <person name="Glavina del Rio T."/>
            <person name="Dalin E."/>
            <person name="Tice H."/>
            <person name="Pitluck S."/>
            <person name="Bruce D."/>
            <person name="Goodwin L."/>
            <person name="Thompson L.S."/>
            <person name="Brettin T."/>
            <person name="Detter J.C."/>
            <person name="Han C."/>
            <person name="Schmutz J."/>
            <person name="Larimer F."/>
            <person name="Land M."/>
            <person name="Hauser L."/>
            <person name="Kyrpides N."/>
            <person name="Kim E."/>
            <person name="Stephens C."/>
            <person name="Richardson P."/>
        </authorList>
    </citation>
    <scope>NUCLEOTIDE SEQUENCE [LARGE SCALE GENOMIC DNA]</scope>
    <source>
        <strain>K31</strain>
    </source>
</reference>
<proteinExistence type="inferred from homology"/>
<gene>
    <name evidence="1" type="primary">hisI</name>
    <name type="ordered locus">Caul_0351</name>
</gene>
<dbReference type="EC" id="3.5.4.19" evidence="1"/>
<dbReference type="EMBL" id="CP000927">
    <property type="protein sequence ID" value="ABZ69488.1"/>
    <property type="molecule type" value="Genomic_DNA"/>
</dbReference>
<dbReference type="SMR" id="B0T5D0"/>
<dbReference type="STRING" id="366602.Caul_0351"/>
<dbReference type="KEGG" id="cak:Caul_0351"/>
<dbReference type="eggNOG" id="COG0139">
    <property type="taxonomic scope" value="Bacteria"/>
</dbReference>
<dbReference type="HOGENOM" id="CLU_048577_5_0_5"/>
<dbReference type="OrthoDB" id="9795769at2"/>
<dbReference type="UniPathway" id="UPA00031">
    <property type="reaction ID" value="UER00008"/>
</dbReference>
<dbReference type="GO" id="GO:0005737">
    <property type="term" value="C:cytoplasm"/>
    <property type="evidence" value="ECO:0007669"/>
    <property type="project" value="UniProtKB-SubCell"/>
</dbReference>
<dbReference type="GO" id="GO:0000287">
    <property type="term" value="F:magnesium ion binding"/>
    <property type="evidence" value="ECO:0007669"/>
    <property type="project" value="UniProtKB-UniRule"/>
</dbReference>
<dbReference type="GO" id="GO:0004635">
    <property type="term" value="F:phosphoribosyl-AMP cyclohydrolase activity"/>
    <property type="evidence" value="ECO:0007669"/>
    <property type="project" value="UniProtKB-UniRule"/>
</dbReference>
<dbReference type="GO" id="GO:0008270">
    <property type="term" value="F:zinc ion binding"/>
    <property type="evidence" value="ECO:0007669"/>
    <property type="project" value="UniProtKB-UniRule"/>
</dbReference>
<dbReference type="GO" id="GO:0000105">
    <property type="term" value="P:L-histidine biosynthetic process"/>
    <property type="evidence" value="ECO:0007669"/>
    <property type="project" value="UniProtKB-UniRule"/>
</dbReference>
<dbReference type="FunFam" id="3.10.20.810:FF:000001">
    <property type="entry name" value="Histidine biosynthesis bifunctional protein HisIE"/>
    <property type="match status" value="1"/>
</dbReference>
<dbReference type="Gene3D" id="3.10.20.810">
    <property type="entry name" value="Phosphoribosyl-AMP cyclohydrolase"/>
    <property type="match status" value="1"/>
</dbReference>
<dbReference type="HAMAP" id="MF_01021">
    <property type="entry name" value="HisI"/>
    <property type="match status" value="1"/>
</dbReference>
<dbReference type="InterPro" id="IPR026660">
    <property type="entry name" value="PRA-CH"/>
</dbReference>
<dbReference type="InterPro" id="IPR002496">
    <property type="entry name" value="PRib_AMP_CycHydrolase_dom"/>
</dbReference>
<dbReference type="InterPro" id="IPR038019">
    <property type="entry name" value="PRib_AMP_CycHydrolase_sf"/>
</dbReference>
<dbReference type="NCBIfam" id="NF000768">
    <property type="entry name" value="PRK00051.1"/>
    <property type="match status" value="1"/>
</dbReference>
<dbReference type="PANTHER" id="PTHR42945">
    <property type="entry name" value="HISTIDINE BIOSYNTHESIS BIFUNCTIONAL PROTEIN"/>
    <property type="match status" value="1"/>
</dbReference>
<dbReference type="PANTHER" id="PTHR42945:SF1">
    <property type="entry name" value="HISTIDINE BIOSYNTHESIS BIFUNCTIONAL PROTEIN HIS7"/>
    <property type="match status" value="1"/>
</dbReference>
<dbReference type="Pfam" id="PF01502">
    <property type="entry name" value="PRA-CH"/>
    <property type="match status" value="1"/>
</dbReference>
<dbReference type="SUPFAM" id="SSF141734">
    <property type="entry name" value="HisI-like"/>
    <property type="match status" value="1"/>
</dbReference>
<sequence length="134" mass="14729">MTVSSIFPPAADKTALERGAAIMPRFDANGLVAAIAQHADTGEILMFAWMNDEALKLTLDTGIAHYFSRSRNSLWKKGETSGQLQIVTELRIDCDQDAVLIKVRPQGDGGACHVGFRSCFYRVWENGALVEREA</sequence>
<keyword id="KW-0028">Amino-acid biosynthesis</keyword>
<keyword id="KW-0963">Cytoplasm</keyword>
<keyword id="KW-0368">Histidine biosynthesis</keyword>
<keyword id="KW-0378">Hydrolase</keyword>
<keyword id="KW-0460">Magnesium</keyword>
<keyword id="KW-0479">Metal-binding</keyword>
<keyword id="KW-0862">Zinc</keyword>
<feature type="chain" id="PRO_1000084176" description="Phosphoribosyl-AMP cyclohydrolase">
    <location>
        <begin position="1"/>
        <end position="134"/>
    </location>
</feature>
<feature type="binding site" evidence="1">
    <location>
        <position position="93"/>
    </location>
    <ligand>
        <name>Mg(2+)</name>
        <dbReference type="ChEBI" id="CHEBI:18420"/>
    </ligand>
</feature>
<feature type="binding site" evidence="1">
    <location>
        <position position="94"/>
    </location>
    <ligand>
        <name>Zn(2+)</name>
        <dbReference type="ChEBI" id="CHEBI:29105"/>
        <note>ligand shared between dimeric partners</note>
    </ligand>
</feature>
<feature type="binding site" evidence="1">
    <location>
        <position position="95"/>
    </location>
    <ligand>
        <name>Mg(2+)</name>
        <dbReference type="ChEBI" id="CHEBI:18420"/>
    </ligand>
</feature>
<feature type="binding site" evidence="1">
    <location>
        <position position="97"/>
    </location>
    <ligand>
        <name>Mg(2+)</name>
        <dbReference type="ChEBI" id="CHEBI:18420"/>
    </ligand>
</feature>
<feature type="binding site" evidence="1">
    <location>
        <position position="112"/>
    </location>
    <ligand>
        <name>Zn(2+)</name>
        <dbReference type="ChEBI" id="CHEBI:29105"/>
        <note>ligand shared between dimeric partners</note>
    </ligand>
</feature>
<feature type="binding site" evidence="1">
    <location>
        <position position="119"/>
    </location>
    <ligand>
        <name>Zn(2+)</name>
        <dbReference type="ChEBI" id="CHEBI:29105"/>
        <note>ligand shared between dimeric partners</note>
    </ligand>
</feature>